<proteinExistence type="inferred from homology"/>
<feature type="chain" id="PRO_0000085017" description="Catalase">
    <location>
        <begin position="1"/>
        <end position="488"/>
    </location>
</feature>
<feature type="region of interest" description="Disordered" evidence="3">
    <location>
        <begin position="1"/>
        <end position="24"/>
    </location>
</feature>
<feature type="compositionally biased region" description="Polar residues" evidence="3">
    <location>
        <begin position="7"/>
        <end position="23"/>
    </location>
</feature>
<feature type="active site" evidence="2">
    <location>
        <position position="55"/>
    </location>
</feature>
<feature type="active site" evidence="2">
    <location>
        <position position="128"/>
    </location>
</feature>
<feature type="binding site" description="axial binding residue" evidence="1">
    <location>
        <position position="338"/>
    </location>
    <ligand>
        <name>heme</name>
        <dbReference type="ChEBI" id="CHEBI:30413"/>
    </ligand>
    <ligandPart>
        <name>Fe</name>
        <dbReference type="ChEBI" id="CHEBI:18248"/>
    </ligandPart>
</feature>
<organism>
    <name type="scientific">Listeria seeligeri</name>
    <dbReference type="NCBI Taxonomy" id="1640"/>
    <lineage>
        <taxon>Bacteria</taxon>
        <taxon>Bacillati</taxon>
        <taxon>Bacillota</taxon>
        <taxon>Bacilli</taxon>
        <taxon>Bacillales</taxon>
        <taxon>Listeriaceae</taxon>
        <taxon>Listeria</taxon>
    </lineage>
</organism>
<name>CATA_LISSE</name>
<keyword id="KW-0963">Cytoplasm</keyword>
<keyword id="KW-0349">Heme</keyword>
<keyword id="KW-0376">Hydrogen peroxide</keyword>
<keyword id="KW-0408">Iron</keyword>
<keyword id="KW-0479">Metal-binding</keyword>
<keyword id="KW-0560">Oxidoreductase</keyword>
<keyword id="KW-0575">Peroxidase</keyword>
<sequence>MTDRRNLTTNQGVPIGDNQNSMTAGLKGPTLLEDYVLIEKLAHFDRERVPERVVHARGAGAHGKFVTKKSMKKYTKAQFLQEEGTETEVFARFSTVIHGQHSPETLRDPRGFSVKFYTEEGNYDFVGNNLPVFFIRDAIKFPDVIHSLKPDPRTNIQDGNRYWDFFSLTPEATTMITYLFSDEGTPASYREIRGSSVHAFKWINEEGKTVYVKLRWVPKAGIVNLSTDQAAQIQAKEFNHASRDLYEAIENGDYPEWDLYVQVLDPKDLDNYDFNPLDATKDWFEDVFPYEHVGTMTLNRNPDNIFAETESVGFNPGVLVPGMLPSEDRVLQGRLFSYSDTQRHRVGPNYLQLPINSPKTPVDNNQRDGQMPFKQQTSSINYEPNSYDTEPKENPAYIEPEQEIRGDISGRLVAEKPNNFGHAKEVWKRYSDAERAALVKNIVDDWEGVREDIKIRNLRNFYQVEPEFAERVAAGTGINLAEHVIDLK</sequence>
<accession>P24168</accession>
<evidence type="ECO:0000250" key="1"/>
<evidence type="ECO:0000255" key="2">
    <source>
        <dbReference type="PROSITE-ProRule" id="PRU10013"/>
    </source>
</evidence>
<evidence type="ECO:0000256" key="3">
    <source>
        <dbReference type="SAM" id="MobiDB-lite"/>
    </source>
</evidence>
<evidence type="ECO:0000305" key="4"/>
<comment type="function">
    <text>Decomposes hydrogen peroxide into water and oxygen; serves to protect cells from the toxic effects of hydrogen peroxide.</text>
</comment>
<comment type="catalytic activity">
    <reaction evidence="2">
        <text>2 H2O2 = O2 + 2 H2O</text>
        <dbReference type="Rhea" id="RHEA:20309"/>
        <dbReference type="ChEBI" id="CHEBI:15377"/>
        <dbReference type="ChEBI" id="CHEBI:15379"/>
        <dbReference type="ChEBI" id="CHEBI:16240"/>
        <dbReference type="EC" id="1.11.1.6"/>
    </reaction>
</comment>
<comment type="cofactor">
    <cofactor>
        <name>heme</name>
        <dbReference type="ChEBI" id="CHEBI:30413"/>
    </cofactor>
</comment>
<comment type="subcellular location">
    <subcellularLocation>
        <location evidence="4">Cytoplasm</location>
    </subcellularLocation>
</comment>
<comment type="similarity">
    <text evidence="4">Belongs to the catalase family.</text>
</comment>
<dbReference type="EC" id="1.11.1.6"/>
<dbReference type="EMBL" id="M75944">
    <property type="protein sequence ID" value="AAB53655.1"/>
    <property type="molecule type" value="Genomic_DNA"/>
</dbReference>
<dbReference type="PIR" id="A40367">
    <property type="entry name" value="A40367"/>
</dbReference>
<dbReference type="SMR" id="P24168"/>
<dbReference type="STRING" id="683837.lse_2685"/>
<dbReference type="eggNOG" id="COG0753">
    <property type="taxonomic scope" value="Bacteria"/>
</dbReference>
<dbReference type="SABIO-RK" id="P24168"/>
<dbReference type="GO" id="GO:0005737">
    <property type="term" value="C:cytoplasm"/>
    <property type="evidence" value="ECO:0007669"/>
    <property type="project" value="UniProtKB-SubCell"/>
</dbReference>
<dbReference type="GO" id="GO:0004096">
    <property type="term" value="F:catalase activity"/>
    <property type="evidence" value="ECO:0007669"/>
    <property type="project" value="UniProtKB-EC"/>
</dbReference>
<dbReference type="GO" id="GO:0020037">
    <property type="term" value="F:heme binding"/>
    <property type="evidence" value="ECO:0007669"/>
    <property type="project" value="InterPro"/>
</dbReference>
<dbReference type="GO" id="GO:0046872">
    <property type="term" value="F:metal ion binding"/>
    <property type="evidence" value="ECO:0007669"/>
    <property type="project" value="UniProtKB-KW"/>
</dbReference>
<dbReference type="GO" id="GO:0042744">
    <property type="term" value="P:hydrogen peroxide catabolic process"/>
    <property type="evidence" value="ECO:0007669"/>
    <property type="project" value="UniProtKB-KW"/>
</dbReference>
<dbReference type="GO" id="GO:0042542">
    <property type="term" value="P:response to hydrogen peroxide"/>
    <property type="evidence" value="ECO:0007669"/>
    <property type="project" value="TreeGrafter"/>
</dbReference>
<dbReference type="CDD" id="cd08154">
    <property type="entry name" value="catalase_clade_1"/>
    <property type="match status" value="1"/>
</dbReference>
<dbReference type="FunFam" id="2.40.180.10:FF:000002">
    <property type="entry name" value="Catalase"/>
    <property type="match status" value="1"/>
</dbReference>
<dbReference type="Gene3D" id="2.40.180.10">
    <property type="entry name" value="Catalase core domain"/>
    <property type="match status" value="1"/>
</dbReference>
<dbReference type="InterPro" id="IPR018028">
    <property type="entry name" value="Catalase"/>
</dbReference>
<dbReference type="InterPro" id="IPR024708">
    <property type="entry name" value="Catalase_AS"/>
</dbReference>
<dbReference type="InterPro" id="IPR024711">
    <property type="entry name" value="Catalase_clade1/3"/>
</dbReference>
<dbReference type="InterPro" id="IPR011614">
    <property type="entry name" value="Catalase_core"/>
</dbReference>
<dbReference type="InterPro" id="IPR002226">
    <property type="entry name" value="Catalase_haem_BS"/>
</dbReference>
<dbReference type="InterPro" id="IPR010582">
    <property type="entry name" value="Catalase_immune_responsive"/>
</dbReference>
<dbReference type="InterPro" id="IPR020835">
    <property type="entry name" value="Catalase_sf"/>
</dbReference>
<dbReference type="PANTHER" id="PTHR11465">
    <property type="entry name" value="CATALASE"/>
    <property type="match status" value="1"/>
</dbReference>
<dbReference type="PANTHER" id="PTHR11465:SF23">
    <property type="entry name" value="CATALASE-2"/>
    <property type="match status" value="1"/>
</dbReference>
<dbReference type="Pfam" id="PF00199">
    <property type="entry name" value="Catalase"/>
    <property type="match status" value="1"/>
</dbReference>
<dbReference type="Pfam" id="PF06628">
    <property type="entry name" value="Catalase-rel"/>
    <property type="match status" value="1"/>
</dbReference>
<dbReference type="PIRSF" id="PIRSF038928">
    <property type="entry name" value="Catalase_clade1-3"/>
    <property type="match status" value="1"/>
</dbReference>
<dbReference type="PRINTS" id="PR00067">
    <property type="entry name" value="CATALASE"/>
</dbReference>
<dbReference type="SMART" id="SM01060">
    <property type="entry name" value="Catalase"/>
    <property type="match status" value="1"/>
</dbReference>
<dbReference type="SUPFAM" id="SSF56634">
    <property type="entry name" value="Heme-dependent catalase-like"/>
    <property type="match status" value="1"/>
</dbReference>
<dbReference type="PROSITE" id="PS00437">
    <property type="entry name" value="CATALASE_1"/>
    <property type="match status" value="1"/>
</dbReference>
<dbReference type="PROSITE" id="PS00438">
    <property type="entry name" value="CATALASE_2"/>
    <property type="match status" value="1"/>
</dbReference>
<dbReference type="PROSITE" id="PS51402">
    <property type="entry name" value="CATALASE_3"/>
    <property type="match status" value="1"/>
</dbReference>
<reference key="1">
    <citation type="journal article" date="1991" name="J. Bacteriol.">
        <title>Cloning, characterization, and expression in Escherichia coli of a gene encoding Listeria seeligeri catalase, a bacterial enzyme highly homologous to mammalian catalases.</title>
        <authorList>
            <person name="Haas A."/>
            <person name="Brehm K."/>
            <person name="Kreft J."/>
            <person name="Goebel W."/>
        </authorList>
    </citation>
    <scope>NUCLEOTIDE SEQUENCE [GENOMIC DNA]</scope>
</reference>
<gene>
    <name type="primary">kat</name>
</gene>
<protein>
    <recommendedName>
        <fullName>Catalase</fullName>
        <ecNumber>1.11.1.6</ecNumber>
    </recommendedName>
</protein>